<name>TSAD_LACLM</name>
<evidence type="ECO:0000255" key="1">
    <source>
        <dbReference type="HAMAP-Rule" id="MF_01445"/>
    </source>
</evidence>
<dbReference type="EC" id="2.3.1.234" evidence="1"/>
<dbReference type="EMBL" id="AM406671">
    <property type="protein sequence ID" value="CAL96915.1"/>
    <property type="molecule type" value="Genomic_DNA"/>
</dbReference>
<dbReference type="RefSeq" id="WP_011834374.1">
    <property type="nucleotide sequence ID" value="NC_009004.1"/>
</dbReference>
<dbReference type="SMR" id="A2RI22"/>
<dbReference type="STRING" id="416870.llmg_0309"/>
<dbReference type="KEGG" id="llm:llmg_0309"/>
<dbReference type="eggNOG" id="COG0533">
    <property type="taxonomic scope" value="Bacteria"/>
</dbReference>
<dbReference type="HOGENOM" id="CLU_023208_0_2_9"/>
<dbReference type="OrthoDB" id="9806197at2"/>
<dbReference type="PhylomeDB" id="A2RI22"/>
<dbReference type="Proteomes" id="UP000000364">
    <property type="component" value="Chromosome"/>
</dbReference>
<dbReference type="GO" id="GO:0005737">
    <property type="term" value="C:cytoplasm"/>
    <property type="evidence" value="ECO:0007669"/>
    <property type="project" value="UniProtKB-SubCell"/>
</dbReference>
<dbReference type="GO" id="GO:0005506">
    <property type="term" value="F:iron ion binding"/>
    <property type="evidence" value="ECO:0007669"/>
    <property type="project" value="UniProtKB-UniRule"/>
</dbReference>
<dbReference type="GO" id="GO:0061711">
    <property type="term" value="F:N(6)-L-threonylcarbamoyladenine synthase activity"/>
    <property type="evidence" value="ECO:0007669"/>
    <property type="project" value="UniProtKB-EC"/>
</dbReference>
<dbReference type="GO" id="GO:0002949">
    <property type="term" value="P:tRNA threonylcarbamoyladenosine modification"/>
    <property type="evidence" value="ECO:0007669"/>
    <property type="project" value="UniProtKB-UniRule"/>
</dbReference>
<dbReference type="CDD" id="cd24133">
    <property type="entry name" value="ASKHA_NBD_TsaD_bac"/>
    <property type="match status" value="1"/>
</dbReference>
<dbReference type="FunFam" id="3.30.420.40:FF:000012">
    <property type="entry name" value="tRNA N6-adenosine threonylcarbamoyltransferase"/>
    <property type="match status" value="1"/>
</dbReference>
<dbReference type="FunFam" id="3.30.420.40:FF:000040">
    <property type="entry name" value="tRNA N6-adenosine threonylcarbamoyltransferase"/>
    <property type="match status" value="1"/>
</dbReference>
<dbReference type="Gene3D" id="3.30.420.40">
    <property type="match status" value="2"/>
</dbReference>
<dbReference type="HAMAP" id="MF_01445">
    <property type="entry name" value="TsaD"/>
    <property type="match status" value="1"/>
</dbReference>
<dbReference type="InterPro" id="IPR043129">
    <property type="entry name" value="ATPase_NBD"/>
</dbReference>
<dbReference type="InterPro" id="IPR000905">
    <property type="entry name" value="Gcp-like_dom"/>
</dbReference>
<dbReference type="InterPro" id="IPR017861">
    <property type="entry name" value="KAE1/TsaD"/>
</dbReference>
<dbReference type="InterPro" id="IPR022450">
    <property type="entry name" value="TsaD"/>
</dbReference>
<dbReference type="NCBIfam" id="TIGR00329">
    <property type="entry name" value="gcp_kae1"/>
    <property type="match status" value="1"/>
</dbReference>
<dbReference type="NCBIfam" id="TIGR03723">
    <property type="entry name" value="T6A_TsaD_YgjD"/>
    <property type="match status" value="1"/>
</dbReference>
<dbReference type="PANTHER" id="PTHR11735">
    <property type="entry name" value="TRNA N6-ADENOSINE THREONYLCARBAMOYLTRANSFERASE"/>
    <property type="match status" value="1"/>
</dbReference>
<dbReference type="PANTHER" id="PTHR11735:SF6">
    <property type="entry name" value="TRNA N6-ADENOSINE THREONYLCARBAMOYLTRANSFERASE, MITOCHONDRIAL"/>
    <property type="match status" value="1"/>
</dbReference>
<dbReference type="Pfam" id="PF00814">
    <property type="entry name" value="TsaD"/>
    <property type="match status" value="1"/>
</dbReference>
<dbReference type="PRINTS" id="PR00789">
    <property type="entry name" value="OSIALOPTASE"/>
</dbReference>
<dbReference type="SUPFAM" id="SSF53067">
    <property type="entry name" value="Actin-like ATPase domain"/>
    <property type="match status" value="1"/>
</dbReference>
<keyword id="KW-0012">Acyltransferase</keyword>
<keyword id="KW-0963">Cytoplasm</keyword>
<keyword id="KW-0408">Iron</keyword>
<keyword id="KW-0479">Metal-binding</keyword>
<keyword id="KW-0808">Transferase</keyword>
<keyword id="KW-0819">tRNA processing</keyword>
<proteinExistence type="inferred from homology"/>
<reference key="1">
    <citation type="journal article" date="2007" name="J. Bacteriol.">
        <title>The complete genome sequence of the lactic acid bacterial paradigm Lactococcus lactis subsp. cremoris MG1363.</title>
        <authorList>
            <person name="Wegmann U."/>
            <person name="O'Connell-Motherway M."/>
            <person name="Zomer A."/>
            <person name="Buist G."/>
            <person name="Shearman C."/>
            <person name="Canchaya C."/>
            <person name="Ventura M."/>
            <person name="Goesmann A."/>
            <person name="Gasson M.J."/>
            <person name="Kuipers O.P."/>
            <person name="van Sinderen D."/>
            <person name="Kok J."/>
        </authorList>
    </citation>
    <scope>NUCLEOTIDE SEQUENCE [LARGE SCALE GENOMIC DNA]</scope>
    <source>
        <strain>MG1363</strain>
    </source>
</reference>
<gene>
    <name evidence="1" type="primary">tsaD</name>
    <name type="synonym">gcp</name>
    <name type="ordered locus">llmg_0309</name>
</gene>
<accession>A2RI22</accession>
<protein>
    <recommendedName>
        <fullName evidence="1">tRNA N6-adenosine threonylcarbamoyltransferase</fullName>
        <ecNumber evidence="1">2.3.1.234</ecNumber>
    </recommendedName>
    <alternativeName>
        <fullName evidence="1">N6-L-threonylcarbamoyladenine synthase</fullName>
        <shortName evidence="1">t(6)A synthase</shortName>
    </alternativeName>
    <alternativeName>
        <fullName evidence="1">t(6)A37 threonylcarbamoyladenosine biosynthesis protein TsaD</fullName>
    </alternativeName>
    <alternativeName>
        <fullName evidence="1">tRNA threonylcarbamoyladenosine biosynthesis protein TsaD</fullName>
    </alternativeName>
</protein>
<comment type="function">
    <text evidence="1">Required for the formation of a threonylcarbamoyl group on adenosine at position 37 (t(6)A37) in tRNAs that read codons beginning with adenine. Is involved in the transfer of the threonylcarbamoyl moiety of threonylcarbamoyl-AMP (TC-AMP) to the N6 group of A37, together with TsaE and TsaB. TsaD likely plays a direct catalytic role in this reaction.</text>
</comment>
<comment type="catalytic activity">
    <reaction evidence="1">
        <text>L-threonylcarbamoyladenylate + adenosine(37) in tRNA = N(6)-L-threonylcarbamoyladenosine(37) in tRNA + AMP + H(+)</text>
        <dbReference type="Rhea" id="RHEA:37059"/>
        <dbReference type="Rhea" id="RHEA-COMP:10162"/>
        <dbReference type="Rhea" id="RHEA-COMP:10163"/>
        <dbReference type="ChEBI" id="CHEBI:15378"/>
        <dbReference type="ChEBI" id="CHEBI:73682"/>
        <dbReference type="ChEBI" id="CHEBI:74411"/>
        <dbReference type="ChEBI" id="CHEBI:74418"/>
        <dbReference type="ChEBI" id="CHEBI:456215"/>
        <dbReference type="EC" id="2.3.1.234"/>
    </reaction>
</comment>
<comment type="cofactor">
    <cofactor evidence="1">
        <name>Fe(2+)</name>
        <dbReference type="ChEBI" id="CHEBI:29033"/>
    </cofactor>
    <text evidence="1">Binds 1 Fe(2+) ion per subunit.</text>
</comment>
<comment type="subcellular location">
    <subcellularLocation>
        <location evidence="1">Cytoplasm</location>
    </subcellularLocation>
</comment>
<comment type="similarity">
    <text evidence="1">Belongs to the KAE1 / TsaD family.</text>
</comment>
<feature type="chain" id="PRO_0000303399" description="tRNA N6-adenosine threonylcarbamoyltransferase">
    <location>
        <begin position="1"/>
        <end position="341"/>
    </location>
</feature>
<feature type="binding site" evidence="1">
    <location>
        <position position="114"/>
    </location>
    <ligand>
        <name>Fe cation</name>
        <dbReference type="ChEBI" id="CHEBI:24875"/>
    </ligand>
</feature>
<feature type="binding site" evidence="1">
    <location>
        <position position="118"/>
    </location>
    <ligand>
        <name>Fe cation</name>
        <dbReference type="ChEBI" id="CHEBI:24875"/>
    </ligand>
</feature>
<feature type="binding site" evidence="1">
    <location>
        <begin position="136"/>
        <end position="140"/>
    </location>
    <ligand>
        <name>substrate</name>
    </ligand>
</feature>
<feature type="binding site" evidence="1">
    <location>
        <position position="169"/>
    </location>
    <ligand>
        <name>substrate</name>
    </ligand>
</feature>
<feature type="binding site" evidence="1">
    <location>
        <position position="182"/>
    </location>
    <ligand>
        <name>substrate</name>
    </ligand>
</feature>
<feature type="binding site" evidence="1">
    <location>
        <position position="186"/>
    </location>
    <ligand>
        <name>substrate</name>
    </ligand>
</feature>
<feature type="binding site" evidence="1">
    <location>
        <position position="278"/>
    </location>
    <ligand>
        <name>substrate</name>
    </ligand>
</feature>
<feature type="binding site" evidence="1">
    <location>
        <position position="304"/>
    </location>
    <ligand>
        <name>Fe cation</name>
        <dbReference type="ChEBI" id="CHEBI:24875"/>
    </ligand>
</feature>
<organism>
    <name type="scientific">Lactococcus lactis subsp. cremoris (strain MG1363)</name>
    <dbReference type="NCBI Taxonomy" id="416870"/>
    <lineage>
        <taxon>Bacteria</taxon>
        <taxon>Bacillati</taxon>
        <taxon>Bacillota</taxon>
        <taxon>Bacilli</taxon>
        <taxon>Lactobacillales</taxon>
        <taxon>Streptococcaceae</taxon>
        <taxon>Lactococcus</taxon>
        <taxon>Lactococcus cremoris subsp. cremoris</taxon>
    </lineage>
</organism>
<sequence length="341" mass="36710">MKDNYILAFETSCDETSVAILKNGSELLCNIIASQINSHKRFGGVVPEIASRHHVEQITVCIEAALEEAEISADQLTAVAVTEGPGLNGALLVGIMAAKTFAWANHLPLIPVNHMAGHLMAASLVDTIEYPAMALLVSGGHSELVYVEKEGSYKKVGETRDDAAGEAYDKVGRVMGLTYPSGKVIDELAHKGQDTYNFPRAMMNTHEVEFSFSGLKSAFINLVHNENQKGNDVIANDLENLAASFQVAVVDVLMAKTKLAMEKYPVKTLIIGGGVSANQGLRERLSAEITDEKLIIPPLRLCGDNAGMIAAAAYIEWKKGLENVQAGLDLNAKPSLVFEDM</sequence>